<sequence>MEGWQRAFVLHSRPWSETSLMLDVFTEESGRVRLVAKGARSKRSNLKGALQPFTPLLLRYSGRGEVKTLRSAEAVSLALPLSGITLYSGLYINELLSRVLEYETRFSELFFDYLNCIQALAGTTGSPEPALRRFELALLGHLGYGVNFTHCAGSGERVDDTMTYRYREEKGFFASVVIDNNTFTGRHLKALEAREFPDVDTLRAAKRFTRMALKPYLGGKPLKSRELFRQFMPKRTVKTKKD</sequence>
<gene>
    <name evidence="1" type="primary">recO</name>
    <name type="ordered locus">SNSL254_A2782</name>
</gene>
<comment type="function">
    <text evidence="1">Involved in DNA repair and RecF pathway recombination.</text>
</comment>
<comment type="subunit">
    <text evidence="1">Monomer.</text>
</comment>
<comment type="similarity">
    <text evidence="1">Belongs to the RecO family.</text>
</comment>
<keyword id="KW-0227">DNA damage</keyword>
<keyword id="KW-0233">DNA recombination</keyword>
<keyword id="KW-0234">DNA repair</keyword>
<feature type="chain" id="PRO_1000099409" description="DNA repair protein RecO">
    <location>
        <begin position="1"/>
        <end position="242"/>
    </location>
</feature>
<dbReference type="EMBL" id="CP001113">
    <property type="protein sequence ID" value="ACF65514.1"/>
    <property type="molecule type" value="Genomic_DNA"/>
</dbReference>
<dbReference type="RefSeq" id="WP_000399380.1">
    <property type="nucleotide sequence ID" value="NZ_CCMR01000001.1"/>
</dbReference>
<dbReference type="SMR" id="B4T1F6"/>
<dbReference type="KEGG" id="see:SNSL254_A2782"/>
<dbReference type="HOGENOM" id="CLU_066645_1_0_6"/>
<dbReference type="Proteomes" id="UP000008824">
    <property type="component" value="Chromosome"/>
</dbReference>
<dbReference type="GO" id="GO:0043590">
    <property type="term" value="C:bacterial nucleoid"/>
    <property type="evidence" value="ECO:0007669"/>
    <property type="project" value="TreeGrafter"/>
</dbReference>
<dbReference type="GO" id="GO:0006310">
    <property type="term" value="P:DNA recombination"/>
    <property type="evidence" value="ECO:0007669"/>
    <property type="project" value="UniProtKB-UniRule"/>
</dbReference>
<dbReference type="GO" id="GO:0006302">
    <property type="term" value="P:double-strand break repair"/>
    <property type="evidence" value="ECO:0007669"/>
    <property type="project" value="TreeGrafter"/>
</dbReference>
<dbReference type="FunFam" id="1.20.1440.120:FF:000001">
    <property type="entry name" value="DNA repair protein RecO"/>
    <property type="match status" value="1"/>
</dbReference>
<dbReference type="FunFam" id="2.40.50.140:FF:000074">
    <property type="entry name" value="DNA repair protein RecO"/>
    <property type="match status" value="1"/>
</dbReference>
<dbReference type="Gene3D" id="2.40.50.140">
    <property type="entry name" value="Nucleic acid-binding proteins"/>
    <property type="match status" value="1"/>
</dbReference>
<dbReference type="Gene3D" id="1.20.1440.120">
    <property type="entry name" value="Recombination protein O, C-terminal domain"/>
    <property type="match status" value="1"/>
</dbReference>
<dbReference type="HAMAP" id="MF_00201">
    <property type="entry name" value="RecO"/>
    <property type="match status" value="1"/>
</dbReference>
<dbReference type="InterPro" id="IPR037278">
    <property type="entry name" value="ARFGAP/RecO"/>
</dbReference>
<dbReference type="InterPro" id="IPR022572">
    <property type="entry name" value="DNA_rep/recomb_RecO_N"/>
</dbReference>
<dbReference type="InterPro" id="IPR012340">
    <property type="entry name" value="NA-bd_OB-fold"/>
</dbReference>
<dbReference type="InterPro" id="IPR003717">
    <property type="entry name" value="RecO"/>
</dbReference>
<dbReference type="InterPro" id="IPR042242">
    <property type="entry name" value="RecO_C"/>
</dbReference>
<dbReference type="NCBIfam" id="TIGR00613">
    <property type="entry name" value="reco"/>
    <property type="match status" value="1"/>
</dbReference>
<dbReference type="PANTHER" id="PTHR33991">
    <property type="entry name" value="DNA REPAIR PROTEIN RECO"/>
    <property type="match status" value="1"/>
</dbReference>
<dbReference type="PANTHER" id="PTHR33991:SF1">
    <property type="entry name" value="DNA REPAIR PROTEIN RECO"/>
    <property type="match status" value="1"/>
</dbReference>
<dbReference type="Pfam" id="PF02565">
    <property type="entry name" value="RecO_C"/>
    <property type="match status" value="1"/>
</dbReference>
<dbReference type="Pfam" id="PF11967">
    <property type="entry name" value="RecO_N"/>
    <property type="match status" value="1"/>
</dbReference>
<dbReference type="SUPFAM" id="SSF57863">
    <property type="entry name" value="ArfGap/RecO-like zinc finger"/>
    <property type="match status" value="1"/>
</dbReference>
<dbReference type="SUPFAM" id="SSF50249">
    <property type="entry name" value="Nucleic acid-binding proteins"/>
    <property type="match status" value="1"/>
</dbReference>
<evidence type="ECO:0000255" key="1">
    <source>
        <dbReference type="HAMAP-Rule" id="MF_00201"/>
    </source>
</evidence>
<protein>
    <recommendedName>
        <fullName evidence="1">DNA repair protein RecO</fullName>
    </recommendedName>
    <alternativeName>
        <fullName evidence="1">Recombination protein O</fullName>
    </alternativeName>
</protein>
<proteinExistence type="inferred from homology"/>
<organism>
    <name type="scientific">Salmonella newport (strain SL254)</name>
    <dbReference type="NCBI Taxonomy" id="423368"/>
    <lineage>
        <taxon>Bacteria</taxon>
        <taxon>Pseudomonadati</taxon>
        <taxon>Pseudomonadota</taxon>
        <taxon>Gammaproteobacteria</taxon>
        <taxon>Enterobacterales</taxon>
        <taxon>Enterobacteriaceae</taxon>
        <taxon>Salmonella</taxon>
    </lineage>
</organism>
<accession>B4T1F6</accession>
<reference key="1">
    <citation type="journal article" date="2011" name="J. Bacteriol.">
        <title>Comparative genomics of 28 Salmonella enterica isolates: evidence for CRISPR-mediated adaptive sublineage evolution.</title>
        <authorList>
            <person name="Fricke W.F."/>
            <person name="Mammel M.K."/>
            <person name="McDermott P.F."/>
            <person name="Tartera C."/>
            <person name="White D.G."/>
            <person name="Leclerc J.E."/>
            <person name="Ravel J."/>
            <person name="Cebula T.A."/>
        </authorList>
    </citation>
    <scope>NUCLEOTIDE SEQUENCE [LARGE SCALE GENOMIC DNA]</scope>
    <source>
        <strain>SL254</strain>
    </source>
</reference>
<name>RECO_SALNS</name>